<keyword id="KW-0238">DNA-binding</keyword>
<keyword id="KW-0479">Metal-binding</keyword>
<keyword id="KW-0539">Nucleus</keyword>
<keyword id="KW-0675">Receptor</keyword>
<keyword id="KW-1185">Reference proteome</keyword>
<keyword id="KW-0804">Transcription</keyword>
<keyword id="KW-0805">Transcription regulation</keyword>
<keyword id="KW-0862">Zinc</keyword>
<keyword id="KW-0863">Zinc-finger</keyword>
<protein>
    <recommendedName>
        <fullName>Nuclear hormone receptor family member nhr-136</fullName>
    </recommendedName>
</protein>
<organism>
    <name type="scientific">Caenorhabditis elegans</name>
    <dbReference type="NCBI Taxonomy" id="6239"/>
    <lineage>
        <taxon>Eukaryota</taxon>
        <taxon>Metazoa</taxon>
        <taxon>Ecdysozoa</taxon>
        <taxon>Nematoda</taxon>
        <taxon>Chromadorea</taxon>
        <taxon>Rhabditida</taxon>
        <taxon>Rhabditina</taxon>
        <taxon>Rhabditomorpha</taxon>
        <taxon>Rhabditoidea</taxon>
        <taxon>Rhabditidae</taxon>
        <taxon>Peloderinae</taxon>
        <taxon>Caenorhabditis</taxon>
    </lineage>
</organism>
<sequence>MLPDFITVPSTSEKCLSPELLLPNMDENLEDSKPSSLKYQKAMMSRGTCPSNCKVCRHSATGYHYDVPSCNGCKTFFRRSILDGRKYTCLKMRKCLSGTEPVDLSRRMCRACRFEKCVEAGMNPSAIQADMKTTDGELLRKEIMIKQKTAVDFLNTPQVIMSFEDKVQGIIGKLTVMELKIEPLYTGGLPPGNRDIRKLDELIDAPLILSYDEIPNLKYCPSVDELTGEIKPSGACYIHCGYLASIEYSKMFDFAHKIDVASKATLIKHATIMCADIMTAFFSYYQRKSDRLIHPNGMFAGPPKYRYGEAGTKYQASMQRTLATVLRHELNRIEYMLLKAIVLCNPAVSSLSISVQQIIGKEREEYVRTLLTYCLLNYGSVHGPSRFSALLAIMSVLESQQKNAKDFHLLAKATILKDAVRYTRISNLYEQIMES</sequence>
<gene>
    <name type="primary">nhr-136</name>
    <name type="ORF">C13C4.3</name>
</gene>
<proteinExistence type="inferred from homology"/>
<dbReference type="EMBL" id="Z92825">
    <property type="protein sequence ID" value="CAB07314.2"/>
    <property type="molecule type" value="Genomic_DNA"/>
</dbReference>
<dbReference type="PIR" id="T19235">
    <property type="entry name" value="T19235"/>
</dbReference>
<dbReference type="RefSeq" id="NP_506039.2">
    <property type="nucleotide sequence ID" value="NM_073638.5"/>
</dbReference>
<dbReference type="SMR" id="O01930"/>
<dbReference type="FunCoup" id="O01930">
    <property type="interactions" value="171"/>
</dbReference>
<dbReference type="STRING" id="6239.C13C4.3a.1"/>
<dbReference type="PaxDb" id="6239-C13C4.3"/>
<dbReference type="EnsemblMetazoa" id="C13C4.3a.1">
    <property type="protein sequence ID" value="C13C4.3a.1"/>
    <property type="gene ID" value="WBGene00003726"/>
</dbReference>
<dbReference type="GeneID" id="182566"/>
<dbReference type="KEGG" id="cel:CELE_C13C4.3"/>
<dbReference type="UCSC" id="C13C4.3">
    <property type="organism name" value="c. elegans"/>
</dbReference>
<dbReference type="AGR" id="WB:WBGene00003726"/>
<dbReference type="CTD" id="182566"/>
<dbReference type="WormBase" id="C13C4.3a">
    <property type="protein sequence ID" value="CE39470"/>
    <property type="gene ID" value="WBGene00003726"/>
    <property type="gene designation" value="nhr-136"/>
</dbReference>
<dbReference type="eggNOG" id="ENOG502TGMR">
    <property type="taxonomic scope" value="Eukaryota"/>
</dbReference>
<dbReference type="GeneTree" id="ENSGT00970000195934"/>
<dbReference type="HOGENOM" id="CLU_007368_3_1_1"/>
<dbReference type="InParanoid" id="O01930"/>
<dbReference type="OMA" id="CLLNYGS"/>
<dbReference type="OrthoDB" id="9984314at2759"/>
<dbReference type="PhylomeDB" id="O01930"/>
<dbReference type="Reactome" id="R-CEL-383280">
    <property type="pathway name" value="Nuclear Receptor transcription pathway"/>
</dbReference>
<dbReference type="Reactome" id="R-CEL-5362517">
    <property type="pathway name" value="Signaling by Retinoic Acid"/>
</dbReference>
<dbReference type="PRO" id="PR:O01930"/>
<dbReference type="Proteomes" id="UP000001940">
    <property type="component" value="Chromosome V"/>
</dbReference>
<dbReference type="Bgee" id="WBGene00003726">
    <property type="expression patterns" value="Expressed in pharyngeal muscle cell (C elegans) and 3 other cell types or tissues"/>
</dbReference>
<dbReference type="ExpressionAtlas" id="O01930">
    <property type="expression patterns" value="baseline and differential"/>
</dbReference>
<dbReference type="GO" id="GO:0005634">
    <property type="term" value="C:nucleus"/>
    <property type="evidence" value="ECO:0007669"/>
    <property type="project" value="UniProtKB-SubCell"/>
</dbReference>
<dbReference type="GO" id="GO:0004879">
    <property type="term" value="F:nuclear receptor activity"/>
    <property type="evidence" value="ECO:0000318"/>
    <property type="project" value="GO_Central"/>
</dbReference>
<dbReference type="GO" id="GO:0000978">
    <property type="term" value="F:RNA polymerase II cis-regulatory region sequence-specific DNA binding"/>
    <property type="evidence" value="ECO:0000318"/>
    <property type="project" value="GO_Central"/>
</dbReference>
<dbReference type="GO" id="GO:0008270">
    <property type="term" value="F:zinc ion binding"/>
    <property type="evidence" value="ECO:0007669"/>
    <property type="project" value="UniProtKB-KW"/>
</dbReference>
<dbReference type="GO" id="GO:0030154">
    <property type="term" value="P:cell differentiation"/>
    <property type="evidence" value="ECO:0000318"/>
    <property type="project" value="GO_Central"/>
</dbReference>
<dbReference type="GO" id="GO:0006357">
    <property type="term" value="P:regulation of transcription by RNA polymerase II"/>
    <property type="evidence" value="ECO:0000318"/>
    <property type="project" value="GO_Central"/>
</dbReference>
<dbReference type="GO" id="GO:0042594">
    <property type="term" value="P:response to starvation"/>
    <property type="evidence" value="ECO:0000270"/>
    <property type="project" value="WormBase"/>
</dbReference>
<dbReference type="CDD" id="cd06960">
    <property type="entry name" value="NR_DBD_HNF4A"/>
    <property type="match status" value="1"/>
</dbReference>
<dbReference type="FunFam" id="3.30.50.10:FF:000050">
    <property type="entry name" value="Nuclear Hormone Receptor family"/>
    <property type="match status" value="1"/>
</dbReference>
<dbReference type="FunFam" id="1.10.565.10:FF:000077">
    <property type="entry name" value="Nuclear hormone receptor family member nhr-153"/>
    <property type="match status" value="1"/>
</dbReference>
<dbReference type="Gene3D" id="3.30.50.10">
    <property type="entry name" value="Erythroid Transcription Factor GATA-1, subunit A"/>
    <property type="match status" value="1"/>
</dbReference>
<dbReference type="Gene3D" id="1.10.565.10">
    <property type="entry name" value="Retinoid X Receptor"/>
    <property type="match status" value="1"/>
</dbReference>
<dbReference type="InterPro" id="IPR049636">
    <property type="entry name" value="HNF4-like_DBD"/>
</dbReference>
<dbReference type="InterPro" id="IPR035500">
    <property type="entry name" value="NHR-like_dom_sf"/>
</dbReference>
<dbReference type="InterPro" id="IPR000536">
    <property type="entry name" value="Nucl_hrmn_rcpt_lig-bd"/>
</dbReference>
<dbReference type="InterPro" id="IPR050274">
    <property type="entry name" value="Nuclear_hormone_rcpt_NR2"/>
</dbReference>
<dbReference type="InterPro" id="IPR001628">
    <property type="entry name" value="Znf_hrmn_rcpt"/>
</dbReference>
<dbReference type="InterPro" id="IPR013088">
    <property type="entry name" value="Znf_NHR/GATA"/>
</dbReference>
<dbReference type="PANTHER" id="PTHR24083">
    <property type="entry name" value="NUCLEAR HORMONE RECEPTOR"/>
    <property type="match status" value="1"/>
</dbReference>
<dbReference type="Pfam" id="PF00104">
    <property type="entry name" value="Hormone_recep"/>
    <property type="match status" value="1"/>
</dbReference>
<dbReference type="Pfam" id="PF00105">
    <property type="entry name" value="zf-C4"/>
    <property type="match status" value="1"/>
</dbReference>
<dbReference type="PRINTS" id="PR00047">
    <property type="entry name" value="STROIDFINGER"/>
</dbReference>
<dbReference type="SMART" id="SM00430">
    <property type="entry name" value="HOLI"/>
    <property type="match status" value="1"/>
</dbReference>
<dbReference type="SMART" id="SM00399">
    <property type="entry name" value="ZnF_C4"/>
    <property type="match status" value="1"/>
</dbReference>
<dbReference type="SUPFAM" id="SSF57716">
    <property type="entry name" value="Glucocorticoid receptor-like (DNA-binding domain)"/>
    <property type="match status" value="1"/>
</dbReference>
<dbReference type="SUPFAM" id="SSF48508">
    <property type="entry name" value="Nuclear receptor ligand-binding domain"/>
    <property type="match status" value="1"/>
</dbReference>
<dbReference type="PROSITE" id="PS51843">
    <property type="entry name" value="NR_LBD"/>
    <property type="match status" value="1"/>
</dbReference>
<dbReference type="PROSITE" id="PS00031">
    <property type="entry name" value="NUCLEAR_REC_DBD_1"/>
    <property type="match status" value="1"/>
</dbReference>
<dbReference type="PROSITE" id="PS51030">
    <property type="entry name" value="NUCLEAR_REC_DBD_2"/>
    <property type="match status" value="1"/>
</dbReference>
<name>NH136_CAEEL</name>
<accession>O01930</accession>
<comment type="function">
    <text>Orphan nuclear receptor.</text>
</comment>
<comment type="subcellular location">
    <subcellularLocation>
        <location evidence="1">Nucleus</location>
    </subcellularLocation>
</comment>
<comment type="similarity">
    <text evidence="3">Belongs to the nuclear hormone receptor family.</text>
</comment>
<feature type="chain" id="PRO_0000053804" description="Nuclear hormone receptor family member nhr-136">
    <location>
        <begin position="1"/>
        <end position="435"/>
    </location>
</feature>
<feature type="domain" description="NR LBD" evidence="2">
    <location>
        <begin position="194"/>
        <end position="430"/>
    </location>
</feature>
<feature type="DNA-binding region" description="Nuclear receptor" evidence="1">
    <location>
        <begin position="50"/>
        <end position="129"/>
    </location>
</feature>
<feature type="zinc finger region" description="NR C4-type" evidence="1">
    <location>
        <begin position="53"/>
        <end position="73"/>
    </location>
</feature>
<feature type="zinc finger region" description="NR C4-type" evidence="1">
    <location>
        <begin position="89"/>
        <end position="112"/>
    </location>
</feature>
<evidence type="ECO:0000255" key="1">
    <source>
        <dbReference type="PROSITE-ProRule" id="PRU00407"/>
    </source>
</evidence>
<evidence type="ECO:0000255" key="2">
    <source>
        <dbReference type="PROSITE-ProRule" id="PRU01189"/>
    </source>
</evidence>
<evidence type="ECO:0000305" key="3"/>
<reference key="1">
    <citation type="journal article" date="1998" name="Science">
        <title>Genome sequence of the nematode C. elegans: a platform for investigating biology.</title>
        <authorList>
            <consortium name="The C. elegans sequencing consortium"/>
        </authorList>
    </citation>
    <scope>NUCLEOTIDE SEQUENCE [LARGE SCALE GENOMIC DNA]</scope>
    <source>
        <strain>Bristol N2</strain>
    </source>
</reference>